<keyword id="KW-0240">DNA-directed RNA polymerase</keyword>
<keyword id="KW-0460">Magnesium</keyword>
<keyword id="KW-0479">Metal-binding</keyword>
<keyword id="KW-0548">Nucleotidyltransferase</keyword>
<keyword id="KW-0804">Transcription</keyword>
<keyword id="KW-0808">Transferase</keyword>
<keyword id="KW-0862">Zinc</keyword>
<protein>
    <recommendedName>
        <fullName evidence="1">DNA-directed RNA polymerase subunit gamma</fullName>
        <shortName evidence="1">RNAP subunit gamma</shortName>
        <ecNumber evidence="1">2.7.7.6</ecNumber>
    </recommendedName>
    <alternativeName>
        <fullName evidence="1">RNA polymerase subunit gamma</fullName>
    </alternativeName>
    <alternativeName>
        <fullName evidence="1">Transcriptase subunit gamma</fullName>
    </alternativeName>
</protein>
<dbReference type="EC" id="2.7.7.6" evidence="1"/>
<dbReference type="EMBL" id="BX548174">
    <property type="protein sequence ID" value="CAE19943.1"/>
    <property type="molecule type" value="Genomic_DNA"/>
</dbReference>
<dbReference type="RefSeq" id="WP_011133112.1">
    <property type="nucleotide sequence ID" value="NC_005072.1"/>
</dbReference>
<dbReference type="SMR" id="Q7V007"/>
<dbReference type="STRING" id="59919.PMM1484"/>
<dbReference type="KEGG" id="pmm:PMM1484"/>
<dbReference type="eggNOG" id="COG0086">
    <property type="taxonomic scope" value="Bacteria"/>
</dbReference>
<dbReference type="HOGENOM" id="CLU_030022_2_0_3"/>
<dbReference type="OrthoDB" id="9815296at2"/>
<dbReference type="Proteomes" id="UP000001026">
    <property type="component" value="Chromosome"/>
</dbReference>
<dbReference type="GO" id="GO:0000428">
    <property type="term" value="C:DNA-directed RNA polymerase complex"/>
    <property type="evidence" value="ECO:0007669"/>
    <property type="project" value="UniProtKB-KW"/>
</dbReference>
<dbReference type="GO" id="GO:0003677">
    <property type="term" value="F:DNA binding"/>
    <property type="evidence" value="ECO:0007669"/>
    <property type="project" value="UniProtKB-UniRule"/>
</dbReference>
<dbReference type="GO" id="GO:0003899">
    <property type="term" value="F:DNA-directed RNA polymerase activity"/>
    <property type="evidence" value="ECO:0007669"/>
    <property type="project" value="UniProtKB-UniRule"/>
</dbReference>
<dbReference type="GO" id="GO:0000287">
    <property type="term" value="F:magnesium ion binding"/>
    <property type="evidence" value="ECO:0007669"/>
    <property type="project" value="UniProtKB-UniRule"/>
</dbReference>
<dbReference type="GO" id="GO:0008270">
    <property type="term" value="F:zinc ion binding"/>
    <property type="evidence" value="ECO:0007669"/>
    <property type="project" value="UniProtKB-UniRule"/>
</dbReference>
<dbReference type="GO" id="GO:0006351">
    <property type="term" value="P:DNA-templated transcription"/>
    <property type="evidence" value="ECO:0007669"/>
    <property type="project" value="UniProtKB-UniRule"/>
</dbReference>
<dbReference type="Gene3D" id="1.10.40.90">
    <property type="match status" value="1"/>
</dbReference>
<dbReference type="Gene3D" id="2.40.40.20">
    <property type="match status" value="1"/>
</dbReference>
<dbReference type="Gene3D" id="4.10.860.120">
    <property type="entry name" value="RNA polymerase II, clamp domain"/>
    <property type="match status" value="1"/>
</dbReference>
<dbReference type="Gene3D" id="1.10.274.100">
    <property type="entry name" value="RNA polymerase Rpb1, domain 3"/>
    <property type="match status" value="1"/>
</dbReference>
<dbReference type="HAMAP" id="MF_01323">
    <property type="entry name" value="RNApol_bact_RpoC1"/>
    <property type="match status" value="1"/>
</dbReference>
<dbReference type="InterPro" id="IPR012755">
    <property type="entry name" value="DNA-dir_RpoC1_gamma"/>
</dbReference>
<dbReference type="InterPro" id="IPR045867">
    <property type="entry name" value="DNA-dir_RpoC_beta_prime"/>
</dbReference>
<dbReference type="InterPro" id="IPR000722">
    <property type="entry name" value="RNA_pol_asu"/>
</dbReference>
<dbReference type="InterPro" id="IPR006592">
    <property type="entry name" value="RNA_pol_N"/>
</dbReference>
<dbReference type="InterPro" id="IPR007080">
    <property type="entry name" value="RNA_pol_Rpb1_1"/>
</dbReference>
<dbReference type="InterPro" id="IPR007066">
    <property type="entry name" value="RNA_pol_Rpb1_3"/>
</dbReference>
<dbReference type="InterPro" id="IPR042102">
    <property type="entry name" value="RNA_pol_Rpb1_3_sf"/>
</dbReference>
<dbReference type="InterPro" id="IPR044893">
    <property type="entry name" value="RNA_pol_Rpb1_clamp_domain"/>
</dbReference>
<dbReference type="InterPro" id="IPR034678">
    <property type="entry name" value="RNApol_RpoC1"/>
</dbReference>
<dbReference type="NCBIfam" id="NF002729">
    <property type="entry name" value="PRK02625.1"/>
    <property type="match status" value="1"/>
</dbReference>
<dbReference type="NCBIfam" id="TIGR02387">
    <property type="entry name" value="rpoC1_cyan"/>
    <property type="match status" value="1"/>
</dbReference>
<dbReference type="PANTHER" id="PTHR19376">
    <property type="entry name" value="DNA-DIRECTED RNA POLYMERASE"/>
    <property type="match status" value="1"/>
</dbReference>
<dbReference type="PANTHER" id="PTHR19376:SF54">
    <property type="entry name" value="DNA-DIRECTED RNA POLYMERASE SUBUNIT BETA"/>
    <property type="match status" value="1"/>
</dbReference>
<dbReference type="Pfam" id="PF04997">
    <property type="entry name" value="RNA_pol_Rpb1_1"/>
    <property type="match status" value="1"/>
</dbReference>
<dbReference type="Pfam" id="PF00623">
    <property type="entry name" value="RNA_pol_Rpb1_2"/>
    <property type="match status" value="2"/>
</dbReference>
<dbReference type="Pfam" id="PF04983">
    <property type="entry name" value="RNA_pol_Rpb1_3"/>
    <property type="match status" value="1"/>
</dbReference>
<dbReference type="SMART" id="SM00663">
    <property type="entry name" value="RPOLA_N"/>
    <property type="match status" value="1"/>
</dbReference>
<dbReference type="SUPFAM" id="SSF64484">
    <property type="entry name" value="beta and beta-prime subunits of DNA dependent RNA-polymerase"/>
    <property type="match status" value="1"/>
</dbReference>
<organism>
    <name type="scientific">Prochlorococcus marinus subsp. pastoris (strain CCMP1986 / NIES-2087 / MED4)</name>
    <dbReference type="NCBI Taxonomy" id="59919"/>
    <lineage>
        <taxon>Bacteria</taxon>
        <taxon>Bacillati</taxon>
        <taxon>Cyanobacteriota</taxon>
        <taxon>Cyanophyceae</taxon>
        <taxon>Synechococcales</taxon>
        <taxon>Prochlorococcaceae</taxon>
        <taxon>Prochlorococcus</taxon>
    </lineage>
</organism>
<name>RPOC1_PROMP</name>
<evidence type="ECO:0000255" key="1">
    <source>
        <dbReference type="HAMAP-Rule" id="MF_01323"/>
    </source>
</evidence>
<gene>
    <name evidence="1" type="primary">rpoC1</name>
    <name type="ordered locus">PMM1484</name>
</gene>
<accession>Q7V007</accession>
<comment type="function">
    <text evidence="1">DNA-dependent RNA polymerase catalyzes the transcription of DNA into RNA using the four ribonucleoside triphosphates as substrates.</text>
</comment>
<comment type="catalytic activity">
    <reaction evidence="1">
        <text>RNA(n) + a ribonucleoside 5'-triphosphate = RNA(n+1) + diphosphate</text>
        <dbReference type="Rhea" id="RHEA:21248"/>
        <dbReference type="Rhea" id="RHEA-COMP:14527"/>
        <dbReference type="Rhea" id="RHEA-COMP:17342"/>
        <dbReference type="ChEBI" id="CHEBI:33019"/>
        <dbReference type="ChEBI" id="CHEBI:61557"/>
        <dbReference type="ChEBI" id="CHEBI:140395"/>
        <dbReference type="EC" id="2.7.7.6"/>
    </reaction>
</comment>
<comment type="cofactor">
    <cofactor evidence="1">
        <name>Mg(2+)</name>
        <dbReference type="ChEBI" id="CHEBI:18420"/>
    </cofactor>
    <text evidence="1">Binds 1 Mg(2+) ion per subunit.</text>
</comment>
<comment type="cofactor">
    <cofactor evidence="1">
        <name>Zn(2+)</name>
        <dbReference type="ChEBI" id="CHEBI:29105"/>
    </cofactor>
    <text evidence="1">Binds 1 Zn(2+) ion per subunit.</text>
</comment>
<comment type="subunit">
    <text evidence="1">In cyanobacteria the RNAP catalytic core is composed of 2 alpha, 1 beta, 1 beta', 1 gamma and 1 omega subunit. When a sigma factor is associated with the core the holoenzyme is formed, which can initiate transcription.</text>
</comment>
<comment type="similarity">
    <text evidence="1">Belongs to the RNA polymerase beta' chain family. RpoC1 subfamily.</text>
</comment>
<reference key="1">
    <citation type="journal article" date="2003" name="Nature">
        <title>Genome divergence in two Prochlorococcus ecotypes reflects oceanic niche differentiation.</title>
        <authorList>
            <person name="Rocap G."/>
            <person name="Larimer F.W."/>
            <person name="Lamerdin J.E."/>
            <person name="Malfatti S."/>
            <person name="Chain P."/>
            <person name="Ahlgren N.A."/>
            <person name="Arellano A."/>
            <person name="Coleman M."/>
            <person name="Hauser L."/>
            <person name="Hess W.R."/>
            <person name="Johnson Z.I."/>
            <person name="Land M.L."/>
            <person name="Lindell D."/>
            <person name="Post A.F."/>
            <person name="Regala W."/>
            <person name="Shah M."/>
            <person name="Shaw S.L."/>
            <person name="Steglich C."/>
            <person name="Sullivan M.B."/>
            <person name="Ting C.S."/>
            <person name="Tolonen A."/>
            <person name="Webb E.A."/>
            <person name="Zinser E.R."/>
            <person name="Chisholm S.W."/>
        </authorList>
    </citation>
    <scope>NUCLEOTIDE SEQUENCE [LARGE SCALE GENOMIC DNA]</scope>
    <source>
        <strain>CCMP1986 / NIES-2087 / MED4</strain>
    </source>
</reference>
<proteinExistence type="inferred from homology"/>
<sequence length="634" mass="72380">MTNSNLRTENHFDYVKISIASPQRIMDWGQRTLPNGQVVGEVTKPETINYRTLKPEMDGLFCEKIFGPSKDWECHCGKYKRVRHRGIVCERCGVEVTESRVRRHRMGYIKLAAPVSHVWYLKGIPSYVAILLDIPLRDVEQIVYFNCYVVLDVGDHKDLKYKQLLTEDEWLEIEDEVYAEDSTIENEPVVGIGAEALKQLLEDLDLNQIAEELREEITNSKGQKRAKLIKRIRVIDNFLATNAKPEWMVLDAIPVIPPDLRPMVQLDGGRFATSDLNDLYRRVINRNNRLARLQEILAPEIIVRNEKRMLQEAVDALIDNGRRGRTVVGANNRALKSLSDIIEGKQGRFRQNLLGKRVDYSGRSVIVVGPKLKMHQCGLPKEMAIELFQPFVIHRLIRQNIVNNIKAAKKLIQKGDDEVMQVLQEVIEGHPILLNRAPTLHRLGIQAFEPKLVGGRAIQLHPLVCPAFNADFDGDQMAVHVPLALEAQTEARMLMLASNNILSPATGEPIVTPSQDMVLGSYYLTALQPNFKKPNFGDNQKTYASLEDVIFAFEDKRVGLHEWVWVRFNGEVDDDEEANKPKESKELEDGSRLETWNFRRDRFDSQNNLISRFILTTVGRVVMNHTIIDSVSKT</sequence>
<feature type="chain" id="PRO_0000067847" description="DNA-directed RNA polymerase subunit gamma">
    <location>
        <begin position="1"/>
        <end position="634"/>
    </location>
</feature>
<feature type="binding site" evidence="1">
    <location>
        <position position="74"/>
    </location>
    <ligand>
        <name>Zn(2+)</name>
        <dbReference type="ChEBI" id="CHEBI:29105"/>
    </ligand>
</feature>
<feature type="binding site" evidence="1">
    <location>
        <position position="76"/>
    </location>
    <ligand>
        <name>Zn(2+)</name>
        <dbReference type="ChEBI" id="CHEBI:29105"/>
    </ligand>
</feature>
<feature type="binding site" evidence="1">
    <location>
        <position position="89"/>
    </location>
    <ligand>
        <name>Zn(2+)</name>
        <dbReference type="ChEBI" id="CHEBI:29105"/>
    </ligand>
</feature>
<feature type="binding site" evidence="1">
    <location>
        <position position="92"/>
    </location>
    <ligand>
        <name>Zn(2+)</name>
        <dbReference type="ChEBI" id="CHEBI:29105"/>
    </ligand>
</feature>
<feature type="binding site" evidence="1">
    <location>
        <position position="471"/>
    </location>
    <ligand>
        <name>Mg(2+)</name>
        <dbReference type="ChEBI" id="CHEBI:18420"/>
    </ligand>
</feature>
<feature type="binding site" evidence="1">
    <location>
        <position position="473"/>
    </location>
    <ligand>
        <name>Mg(2+)</name>
        <dbReference type="ChEBI" id="CHEBI:18420"/>
    </ligand>
</feature>
<feature type="binding site" evidence="1">
    <location>
        <position position="475"/>
    </location>
    <ligand>
        <name>Mg(2+)</name>
        <dbReference type="ChEBI" id="CHEBI:18420"/>
    </ligand>
</feature>